<comment type="function">
    <text>Putative pheromone receptor.</text>
</comment>
<comment type="subcellular location">
    <subcellularLocation>
        <location evidence="3">Cell membrane</location>
        <topology evidence="3">Multi-pass membrane protein</topology>
    </subcellularLocation>
</comment>
<comment type="tissue specificity">
    <text evidence="2">Expressed at the sensory surface of the vomeronasal organ.</text>
</comment>
<comment type="miscellaneous">
    <text>The variant protein sequence (Ref.3) is capable of binding the sex pheromone, 2-octanamine (2-1, methyl heptyl) via aa 11-17.</text>
</comment>
<comment type="similarity">
    <text evidence="3">Belongs to the G-protein coupled receptor 3 family.</text>
</comment>
<evidence type="ECO:0000255" key="1"/>
<evidence type="ECO:0000269" key="2">
    <source>
    </source>
</evidence>
<evidence type="ECO:0000305" key="3"/>
<gene>
    <name type="primary">Vmn2r1</name>
</gene>
<organism>
    <name type="scientific">Mus musculus</name>
    <name type="common">Mouse</name>
    <dbReference type="NCBI Taxonomy" id="10090"/>
    <lineage>
        <taxon>Eukaryota</taxon>
        <taxon>Metazoa</taxon>
        <taxon>Chordata</taxon>
        <taxon>Craniata</taxon>
        <taxon>Vertebrata</taxon>
        <taxon>Euteleostomi</taxon>
        <taxon>Mammalia</taxon>
        <taxon>Eutheria</taxon>
        <taxon>Euarchontoglires</taxon>
        <taxon>Glires</taxon>
        <taxon>Rodentia</taxon>
        <taxon>Myomorpha</taxon>
        <taxon>Muroidea</taxon>
        <taxon>Muridae</taxon>
        <taxon>Murinae</taxon>
        <taxon>Mus</taxon>
        <taxon>Mus</taxon>
    </lineage>
</organism>
<accession>O70410</accession>
<accession>Q0WXF6</accession>
<sequence length="912" mass="102349">MASRQISLALGFLAFLWAVLGAQNKTEEVQCRLMAKFNLSGYVDAKNHSLVIAGLFPIHSRIIPVDEAILEPVSPMCEGFNFRGFRWMKTMIHTIKEINERKDILPNHTLGYQIFDSCYTISKAMESSLVFLTGQEEFKPNFRNSTGSTLAALVGSGGSSLSVAASRILGLYYMPQVGYTSSCSILSDKFQFPSYLRVLPSDNLQSEAIVNLIKHFGWVWVGAIAADDDYGKYGVKTFKEKMESANLCVAFSETIPKVYSNEKMQKAVKAVKTSTAKVIVLYTSDIDLSLFVLEMIHHNITDRTWIATEAWITSALIAKPEYFPYFGGTIGFATPRSVIPGLKEFLYDVHPNKDPNDVLTIEFWQTAFNCTWPNSSVPYNVDHRVNMTGKEDRLYDMSDQLCTGEEKLEDLKNTYLDTSQLRITKQCKQAVYAIAHGLDHLSRCQEGQGPFGSNQQCAYIPTFDFWQLMYYMKEIKFKSHEDKWVILDDNGDLKNGHYDVLNWHLDDEGEISFVTVGRFNFRSTNFELVIPTNSTIFWNTESSRRPDSFCTQVCPPGTRKGIRQGQPICCFDCIPCADGYVSEKSGQRECDPCGEDDWSNAGKSKCVPKLVEFLAYGEALGFTLVILSIFGALVVLAVTVVYVIHRHTPLVKANDRELSFLIQMSLVITVLSSLLFIGKPCNWSCMARQITLALGFCLCLSSILGKTISLFFAYRISVSKTRLISMHPIFRKLIVLVCVVGEIGVCAAYLVLEPPRMFKNIEIQNVKIIFECNEGSVEFLCSIFGFDVLRALLCFLTTFVARQLPDNYYEGKCITFGMLVFFIVWISFVPAYLSTKGKFKVAVEIFAILASSYGLLGCLFLPKCFIILLRPKRNTDETVGGRVPTVDRSIQLTSASVSSELNSTTVSTVLDE</sequence>
<proteinExistence type="evidence at protein level"/>
<protein>
    <recommendedName>
        <fullName>Vomeronasal type-2 receptor 1</fullName>
    </recommendedName>
    <alternativeName>
        <fullName>Putative pheromone receptor V2R1</fullName>
    </alternativeName>
    <alternativeName>
        <fullName>V2Rx</fullName>
    </alternativeName>
</protein>
<dbReference type="EMBL" id="AF053986">
    <property type="protein sequence ID" value="AAC08413.1"/>
    <property type="molecule type" value="mRNA"/>
</dbReference>
<dbReference type="EMBL" id="AB267725">
    <property type="protein sequence ID" value="BAF02665.1"/>
    <property type="molecule type" value="mRNA"/>
</dbReference>
<dbReference type="CCDS" id="CCDS17384.1"/>
<dbReference type="RefSeq" id="NP_064302.2">
    <property type="nucleotide sequence ID" value="NM_019918.2"/>
</dbReference>
<dbReference type="SMR" id="O70410"/>
<dbReference type="FunCoup" id="O70410">
    <property type="interactions" value="1"/>
</dbReference>
<dbReference type="STRING" id="10090.ENSMUSP00000029406"/>
<dbReference type="TCDB" id="9.A.14.7.6">
    <property type="family name" value="the g-protein-coupled receptor (gpcr) family"/>
</dbReference>
<dbReference type="GlyCosmos" id="O70410">
    <property type="glycosylation" value="4 sites, No reported glycans"/>
</dbReference>
<dbReference type="GlyGen" id="O70410">
    <property type="glycosylation" value="4 sites"/>
</dbReference>
<dbReference type="PhosphoSitePlus" id="O70410"/>
<dbReference type="PaxDb" id="10090-ENSMUSP00000029406"/>
<dbReference type="ProteomicsDB" id="300109"/>
<dbReference type="DNASU" id="56544"/>
<dbReference type="GeneID" id="56544"/>
<dbReference type="KEGG" id="mmu:56544"/>
<dbReference type="AGR" id="MGI:3645892"/>
<dbReference type="CTD" id="56544"/>
<dbReference type="MGI" id="MGI:3645892">
    <property type="gene designation" value="Vmn2r1"/>
</dbReference>
<dbReference type="eggNOG" id="KOG1056">
    <property type="taxonomic scope" value="Eukaryota"/>
</dbReference>
<dbReference type="InParanoid" id="O70410"/>
<dbReference type="OrthoDB" id="5984008at2759"/>
<dbReference type="PhylomeDB" id="O70410"/>
<dbReference type="BioGRID-ORCS" id="56544">
    <property type="hits" value="2 hits in 73 CRISPR screens"/>
</dbReference>
<dbReference type="ChiTaRS" id="Vmn2r1">
    <property type="organism name" value="mouse"/>
</dbReference>
<dbReference type="PRO" id="PR:O70410"/>
<dbReference type="Proteomes" id="UP000000589">
    <property type="component" value="Unplaced"/>
</dbReference>
<dbReference type="RNAct" id="O70410">
    <property type="molecule type" value="protein"/>
</dbReference>
<dbReference type="GO" id="GO:0005938">
    <property type="term" value="C:cell cortex"/>
    <property type="evidence" value="ECO:0000314"/>
    <property type="project" value="MGI"/>
</dbReference>
<dbReference type="GO" id="GO:0005886">
    <property type="term" value="C:plasma membrane"/>
    <property type="evidence" value="ECO:0007669"/>
    <property type="project" value="UniProtKB-SubCell"/>
</dbReference>
<dbReference type="GO" id="GO:0038022">
    <property type="term" value="F:G protein-coupled olfactory receptor activity"/>
    <property type="evidence" value="ECO:0000315"/>
    <property type="project" value="MGI"/>
</dbReference>
<dbReference type="GO" id="GO:0030182">
    <property type="term" value="P:neuron differentiation"/>
    <property type="evidence" value="ECO:0000315"/>
    <property type="project" value="MGI"/>
</dbReference>
<dbReference type="GO" id="GO:0019236">
    <property type="term" value="P:response to pheromone"/>
    <property type="evidence" value="ECO:0007669"/>
    <property type="project" value="UniProtKB-KW"/>
</dbReference>
<dbReference type="CDD" id="cd15280">
    <property type="entry name" value="7tmC_V2R-like"/>
    <property type="match status" value="1"/>
</dbReference>
<dbReference type="CDD" id="cd06364">
    <property type="entry name" value="PBP1_CaSR"/>
    <property type="match status" value="1"/>
</dbReference>
<dbReference type="FunFam" id="3.40.50.2300:FF:000016">
    <property type="entry name" value="Taste 1 receptor member 2"/>
    <property type="match status" value="1"/>
</dbReference>
<dbReference type="FunFam" id="2.10.50.30:FF:000002">
    <property type="entry name" value="Vomeronasal 2 receptor, h1"/>
    <property type="match status" value="1"/>
</dbReference>
<dbReference type="Gene3D" id="3.40.50.2300">
    <property type="match status" value="2"/>
</dbReference>
<dbReference type="Gene3D" id="2.10.50.30">
    <property type="entry name" value="GPCR, family 3, nine cysteines domain"/>
    <property type="match status" value="1"/>
</dbReference>
<dbReference type="InterPro" id="IPR001828">
    <property type="entry name" value="ANF_lig-bd_rcpt"/>
</dbReference>
<dbReference type="InterPro" id="IPR000337">
    <property type="entry name" value="GPCR_3"/>
</dbReference>
<dbReference type="InterPro" id="IPR011500">
    <property type="entry name" value="GPCR_3_9-Cys_dom"/>
</dbReference>
<dbReference type="InterPro" id="IPR038550">
    <property type="entry name" value="GPCR_3_9-Cys_sf"/>
</dbReference>
<dbReference type="InterPro" id="IPR017978">
    <property type="entry name" value="GPCR_3_C"/>
</dbReference>
<dbReference type="InterPro" id="IPR000068">
    <property type="entry name" value="GPCR_3_Ca_sens_rcpt-rel"/>
</dbReference>
<dbReference type="InterPro" id="IPR028082">
    <property type="entry name" value="Peripla_BP_I"/>
</dbReference>
<dbReference type="PANTHER" id="PTHR24061">
    <property type="entry name" value="CALCIUM-SENSING RECEPTOR-RELATED"/>
    <property type="match status" value="1"/>
</dbReference>
<dbReference type="PANTHER" id="PTHR24061:SF546">
    <property type="entry name" value="VOMERONASAL TYPE-2 RECEPTOR 1"/>
    <property type="match status" value="1"/>
</dbReference>
<dbReference type="Pfam" id="PF00003">
    <property type="entry name" value="7tm_3"/>
    <property type="match status" value="1"/>
</dbReference>
<dbReference type="Pfam" id="PF01094">
    <property type="entry name" value="ANF_receptor"/>
    <property type="match status" value="1"/>
</dbReference>
<dbReference type="Pfam" id="PF07562">
    <property type="entry name" value="NCD3G"/>
    <property type="match status" value="1"/>
</dbReference>
<dbReference type="PRINTS" id="PR00592">
    <property type="entry name" value="CASENSINGR"/>
</dbReference>
<dbReference type="PRINTS" id="PR00248">
    <property type="entry name" value="GPCRMGR"/>
</dbReference>
<dbReference type="SUPFAM" id="SSF53822">
    <property type="entry name" value="Periplasmic binding protein-like I"/>
    <property type="match status" value="1"/>
</dbReference>
<dbReference type="PROSITE" id="PS50259">
    <property type="entry name" value="G_PROTEIN_RECEP_F3_4"/>
    <property type="match status" value="1"/>
</dbReference>
<reference key="1">
    <citation type="journal article" date="1997" name="Neuron">
        <title>A new multigene family of putative pheromone receptors.</title>
        <authorList>
            <person name="Ryba N.J.P."/>
            <person name="Tirindelli R."/>
        </authorList>
    </citation>
    <scope>NUCLEOTIDE SEQUENCE [MRNA]</scope>
    <source>
        <tissue>Vomeronasal sensory neuron</tissue>
    </source>
</reference>
<reference key="2">
    <citation type="submission" date="2006-08" db="EMBL/GenBank/DDBJ databases">
        <title>Molecular cloning and characterisation of mouse V2Rx pheromone receptor.</title>
        <authorList>
            <person name="Kannan S."/>
            <person name="Krishnan M."/>
        </authorList>
    </citation>
    <scope>NUCLEOTIDE SEQUENCE [MRNA]</scope>
</reference>
<reference key="3">
    <citation type="submission" date="2006-05" db="UniProtKB">
        <authorList>
            <person name="Kannan S."/>
        </authorList>
    </citation>
    <scope>PARTIAL PROTEIN SEQUENCE</scope>
    <scope>BINDING TO SEX PHEROMONE</scope>
</reference>
<reference key="4">
    <citation type="journal article" date="2001" name="J. Neurosci.">
        <title>Co-expression of putative pheromone receptors in the sensory neurons of the vomeronasal organ.</title>
        <authorList>
            <person name="Martini S."/>
            <person name="Silvotti L."/>
            <person name="Shirazi A."/>
            <person name="Ryba N.J.P."/>
            <person name="Tirindelli R."/>
        </authorList>
    </citation>
    <scope>TISSUE SPECIFICITY</scope>
</reference>
<feature type="signal peptide" evidence="1">
    <location>
        <begin position="1"/>
        <end position="21"/>
    </location>
</feature>
<feature type="chain" id="PRO_0000246126" description="Vomeronasal type-2 receptor 1">
    <location>
        <begin position="22"/>
        <end position="912"/>
    </location>
</feature>
<feature type="topological domain" description="Extracellular" evidence="1">
    <location>
        <begin position="22"/>
        <end position="623"/>
    </location>
</feature>
<feature type="transmembrane region" description="Helical" evidence="1">
    <location>
        <begin position="624"/>
        <end position="644"/>
    </location>
</feature>
<feature type="topological domain" description="Cytoplasmic" evidence="1">
    <location>
        <begin position="645"/>
        <end position="657"/>
    </location>
</feature>
<feature type="transmembrane region" description="Helical" evidence="1">
    <location>
        <begin position="658"/>
        <end position="678"/>
    </location>
</feature>
<feature type="topological domain" description="Extracellular" evidence="1">
    <location>
        <begin position="679"/>
        <end position="691"/>
    </location>
</feature>
<feature type="transmembrane region" description="Helical" evidence="1">
    <location>
        <begin position="692"/>
        <end position="712"/>
    </location>
</feature>
<feature type="topological domain" description="Cytoplasmic" evidence="1">
    <location>
        <begin position="713"/>
        <end position="732"/>
    </location>
</feature>
<feature type="transmembrane region" description="Helical" evidence="1">
    <location>
        <begin position="733"/>
        <end position="753"/>
    </location>
</feature>
<feature type="topological domain" description="Extracellular" evidence="1">
    <location>
        <begin position="754"/>
        <end position="778"/>
    </location>
</feature>
<feature type="transmembrane region" description="Helical" evidence="1">
    <location>
        <begin position="779"/>
        <end position="799"/>
    </location>
</feature>
<feature type="topological domain" description="Cytoplasmic" evidence="1">
    <location>
        <begin position="800"/>
        <end position="812"/>
    </location>
</feature>
<feature type="transmembrane region" description="Helical" evidence="1">
    <location>
        <begin position="813"/>
        <end position="833"/>
    </location>
</feature>
<feature type="topological domain" description="Extracellular" evidence="1">
    <location>
        <begin position="834"/>
        <end position="840"/>
    </location>
</feature>
<feature type="transmembrane region" description="Helical" evidence="1">
    <location>
        <begin position="841"/>
        <end position="861"/>
    </location>
</feature>
<feature type="topological domain" description="Cytoplasmic" evidence="1">
    <location>
        <begin position="862"/>
        <end position="912"/>
    </location>
</feature>
<feature type="glycosylation site" description="N-linked (GlcNAc...) asparagine" evidence="1">
    <location>
        <position position="24"/>
    </location>
</feature>
<feature type="glycosylation site" description="N-linked (GlcNAc...) asparagine" evidence="1">
    <location>
        <position position="38"/>
    </location>
</feature>
<feature type="glycosylation site" description="N-linked (GlcNAc...) asparagine" evidence="1">
    <location>
        <position position="299"/>
    </location>
</feature>
<feature type="glycosylation site" description="N-linked (GlcNAc...) asparagine" evidence="1">
    <location>
        <position position="386"/>
    </location>
</feature>
<feature type="sequence conflict" description="In Ref. 2; BAF02665 and 3." evidence="3" ref="2 3">
    <original>FLAFLW</original>
    <variation>AEAAEH</variation>
    <location>
        <begin position="12"/>
        <end position="17"/>
    </location>
</feature>
<keyword id="KW-1003">Cell membrane</keyword>
<keyword id="KW-0903">Direct protein sequencing</keyword>
<keyword id="KW-0297">G-protein coupled receptor</keyword>
<keyword id="KW-0325">Glycoprotein</keyword>
<keyword id="KW-0472">Membrane</keyword>
<keyword id="KW-0589">Pheromone response</keyword>
<keyword id="KW-0675">Receptor</keyword>
<keyword id="KW-1185">Reference proteome</keyword>
<keyword id="KW-0732">Signal</keyword>
<keyword id="KW-0807">Transducer</keyword>
<keyword id="KW-0812">Transmembrane</keyword>
<keyword id="KW-1133">Transmembrane helix</keyword>
<name>V2R1_MOUSE</name>